<name>KAE1_PYRAR</name>
<keyword id="KW-0012">Acyltransferase</keyword>
<keyword id="KW-0963">Cytoplasm</keyword>
<keyword id="KW-0408">Iron</keyword>
<keyword id="KW-0479">Metal-binding</keyword>
<keyword id="KW-0808">Transferase</keyword>
<keyword id="KW-0819">tRNA processing</keyword>
<feature type="chain" id="PRO_0000303638" description="tRNA N6-adenosine threonylcarbamoyltransferase">
    <location>
        <begin position="1"/>
        <end position="332"/>
    </location>
</feature>
<feature type="binding site" evidence="1">
    <location>
        <position position="108"/>
    </location>
    <ligand>
        <name>Fe cation</name>
        <dbReference type="ChEBI" id="CHEBI:24875"/>
    </ligand>
</feature>
<feature type="binding site" evidence="1">
    <location>
        <position position="112"/>
    </location>
    <ligand>
        <name>Fe cation</name>
        <dbReference type="ChEBI" id="CHEBI:24875"/>
    </ligand>
</feature>
<feature type="binding site" evidence="1">
    <location>
        <begin position="129"/>
        <end position="133"/>
    </location>
    <ligand>
        <name>substrate</name>
    </ligand>
</feature>
<feature type="binding site" evidence="1">
    <location>
        <position position="161"/>
    </location>
    <ligand>
        <name>substrate</name>
    </ligand>
</feature>
<feature type="binding site" evidence="1">
    <location>
        <position position="178"/>
    </location>
    <ligand>
        <name>substrate</name>
    </ligand>
</feature>
<feature type="binding site" evidence="1">
    <location>
        <position position="258"/>
    </location>
    <ligand>
        <name>substrate</name>
    </ligand>
</feature>
<feature type="binding site" evidence="1">
    <location>
        <position position="286"/>
    </location>
    <ligand>
        <name>Fe cation</name>
        <dbReference type="ChEBI" id="CHEBI:24875"/>
    </ligand>
</feature>
<proteinExistence type="inferred from homology"/>
<comment type="function">
    <text evidence="1">Required for the formation of a threonylcarbamoyl group on adenosine at position 37 (t(6)A37) in tRNAs that read codons beginning with adenine. Is probably involved in the transfer of the threonylcarbamoyl moiety of threonylcarbamoyl-AMP (TC-AMP) to the N6 group of A37.</text>
</comment>
<comment type="catalytic activity">
    <reaction evidence="1">
        <text>L-threonylcarbamoyladenylate + adenosine(37) in tRNA = N(6)-L-threonylcarbamoyladenosine(37) in tRNA + AMP + H(+)</text>
        <dbReference type="Rhea" id="RHEA:37059"/>
        <dbReference type="Rhea" id="RHEA-COMP:10162"/>
        <dbReference type="Rhea" id="RHEA-COMP:10163"/>
        <dbReference type="ChEBI" id="CHEBI:15378"/>
        <dbReference type="ChEBI" id="CHEBI:73682"/>
        <dbReference type="ChEBI" id="CHEBI:74411"/>
        <dbReference type="ChEBI" id="CHEBI:74418"/>
        <dbReference type="ChEBI" id="CHEBI:456215"/>
        <dbReference type="EC" id="2.3.1.234"/>
    </reaction>
</comment>
<comment type="cofactor">
    <cofactor evidence="1">
        <name>Fe(2+)</name>
        <dbReference type="ChEBI" id="CHEBI:29033"/>
    </cofactor>
    <text evidence="1">Binds 1 Fe(2+) ion per subunit.</text>
</comment>
<comment type="subcellular location">
    <subcellularLocation>
        <location evidence="1">Cytoplasm</location>
    </subcellularLocation>
</comment>
<comment type="similarity">
    <text evidence="1">Belongs to the KAE1 / TsaD family.</text>
</comment>
<reference key="1">
    <citation type="submission" date="2007-04" db="EMBL/GenBank/DDBJ databases">
        <title>Complete sequence of Pyrobaculum arsenaticum DSM 13514.</title>
        <authorList>
            <consortium name="US DOE Joint Genome Institute"/>
            <person name="Copeland A."/>
            <person name="Lucas S."/>
            <person name="Lapidus A."/>
            <person name="Barry K."/>
            <person name="Glavina del Rio T."/>
            <person name="Dalin E."/>
            <person name="Tice H."/>
            <person name="Pitluck S."/>
            <person name="Chain P."/>
            <person name="Malfatti S."/>
            <person name="Shin M."/>
            <person name="Vergez L."/>
            <person name="Schmutz J."/>
            <person name="Larimer F."/>
            <person name="Land M."/>
            <person name="Hauser L."/>
            <person name="Kyrpides N."/>
            <person name="Mikhailova N."/>
            <person name="Cozen A.E."/>
            <person name="Fitz-Gibbon S.T."/>
            <person name="House C.H."/>
            <person name="Saltikov C."/>
            <person name="Lowe T.M."/>
            <person name="Richardson P."/>
        </authorList>
    </citation>
    <scope>NUCLEOTIDE SEQUENCE [LARGE SCALE GENOMIC DNA]</scope>
    <source>
        <strain>ATCC 700994 / DSM 13514 / JCM 11321 / PZ6</strain>
    </source>
</reference>
<protein>
    <recommendedName>
        <fullName evidence="1">tRNA N6-adenosine threonylcarbamoyltransferase</fullName>
        <ecNumber evidence="1">2.3.1.234</ecNumber>
    </recommendedName>
    <alternativeName>
        <fullName evidence="1">N6-L-threonylcarbamoyladenine synthase</fullName>
        <shortName evidence="1">t(6)A synthase</shortName>
    </alternativeName>
    <alternativeName>
        <fullName evidence="1">t(6)A37 threonylcarbamoyladenosine biosynthesis protein Kae1</fullName>
    </alternativeName>
    <alternativeName>
        <fullName evidence="1">tRNA threonylcarbamoyladenosine biosynthesis protein Kae1</fullName>
    </alternativeName>
</protein>
<evidence type="ECO:0000255" key="1">
    <source>
        <dbReference type="HAMAP-Rule" id="MF_01446"/>
    </source>
</evidence>
<sequence>MLVLGVESTAHTISLGLVKDGDVLGQVGKTYVPPSGLGIHPREAADHHSQMAPQLLSHLLYRHGVRLSDVDVVAYAAGPGLGPALRVGAVLARAIAIKLGVPIVPVHHGIAHIEIARYATKSCDPLVVLISGGHTVIAGYSDRRYRIFGETLDVAIGNAIDMFAREAGLGFPGVPAVERCGESADRLVEFPMPIVGQDMSYAGLTTYALKLLKEGVPLSVICKSLVEAAYYMLAEVTERALAFTRKSELVVAGGVARSRRLREILSQVGAYHGAEVKVVPDEYAGDNGAMIALTGYYAYKRGVYTTPEESFVRQRWRLDAVDVPWFWDLCNR</sequence>
<gene>
    <name evidence="1" type="primary">kae1</name>
    <name type="ordered locus">Pars_1440</name>
</gene>
<dbReference type="EC" id="2.3.1.234" evidence="1"/>
<dbReference type="EMBL" id="CP000660">
    <property type="protein sequence ID" value="ABP50998.1"/>
    <property type="molecule type" value="Genomic_DNA"/>
</dbReference>
<dbReference type="SMR" id="A4WKT1"/>
<dbReference type="STRING" id="340102.Pars_1440"/>
<dbReference type="KEGG" id="pas:Pars_1440"/>
<dbReference type="HOGENOM" id="CLU_023208_2_2_2"/>
<dbReference type="OrthoDB" id="6818at2157"/>
<dbReference type="PhylomeDB" id="A4WKT1"/>
<dbReference type="Proteomes" id="UP000001567">
    <property type="component" value="Chromosome"/>
</dbReference>
<dbReference type="GO" id="GO:0005737">
    <property type="term" value="C:cytoplasm"/>
    <property type="evidence" value="ECO:0007669"/>
    <property type="project" value="UniProtKB-SubCell"/>
</dbReference>
<dbReference type="GO" id="GO:0000408">
    <property type="term" value="C:EKC/KEOPS complex"/>
    <property type="evidence" value="ECO:0007669"/>
    <property type="project" value="InterPro"/>
</dbReference>
<dbReference type="GO" id="GO:0005506">
    <property type="term" value="F:iron ion binding"/>
    <property type="evidence" value="ECO:0007669"/>
    <property type="project" value="UniProtKB-UniRule"/>
</dbReference>
<dbReference type="GO" id="GO:0061711">
    <property type="term" value="F:N(6)-L-threonylcarbamoyladenine synthase activity"/>
    <property type="evidence" value="ECO:0007669"/>
    <property type="project" value="UniProtKB-EC"/>
</dbReference>
<dbReference type="GO" id="GO:0002949">
    <property type="term" value="P:tRNA threonylcarbamoyladenosine modification"/>
    <property type="evidence" value="ECO:0007669"/>
    <property type="project" value="UniProtKB-UniRule"/>
</dbReference>
<dbReference type="Gene3D" id="3.30.420.40">
    <property type="match status" value="2"/>
</dbReference>
<dbReference type="HAMAP" id="MF_01446">
    <property type="entry name" value="Kae1"/>
    <property type="match status" value="1"/>
</dbReference>
<dbReference type="InterPro" id="IPR043129">
    <property type="entry name" value="ATPase_NBD"/>
</dbReference>
<dbReference type="InterPro" id="IPR000905">
    <property type="entry name" value="Gcp-like_dom"/>
</dbReference>
<dbReference type="InterPro" id="IPR017861">
    <property type="entry name" value="KAE1/TsaD"/>
</dbReference>
<dbReference type="InterPro" id="IPR034680">
    <property type="entry name" value="Kae1_archaea_euk"/>
</dbReference>
<dbReference type="InterPro" id="IPR017860">
    <property type="entry name" value="Peptidase_M22_CS"/>
</dbReference>
<dbReference type="NCBIfam" id="TIGR03722">
    <property type="entry name" value="arch_KAE1"/>
    <property type="match status" value="1"/>
</dbReference>
<dbReference type="NCBIfam" id="TIGR00329">
    <property type="entry name" value="gcp_kae1"/>
    <property type="match status" value="1"/>
</dbReference>
<dbReference type="PANTHER" id="PTHR11735">
    <property type="entry name" value="TRNA N6-ADENOSINE THREONYLCARBAMOYLTRANSFERASE"/>
    <property type="match status" value="1"/>
</dbReference>
<dbReference type="PANTHER" id="PTHR11735:SF14">
    <property type="entry name" value="TRNA N6-ADENOSINE THREONYLCARBAMOYLTRANSFERASE"/>
    <property type="match status" value="1"/>
</dbReference>
<dbReference type="Pfam" id="PF00814">
    <property type="entry name" value="TsaD"/>
    <property type="match status" value="1"/>
</dbReference>
<dbReference type="PRINTS" id="PR00789">
    <property type="entry name" value="OSIALOPTASE"/>
</dbReference>
<dbReference type="SUPFAM" id="SSF53067">
    <property type="entry name" value="Actin-like ATPase domain"/>
    <property type="match status" value="1"/>
</dbReference>
<dbReference type="PROSITE" id="PS01016">
    <property type="entry name" value="GLYCOPROTEASE"/>
    <property type="match status" value="1"/>
</dbReference>
<accession>A4WKT1</accession>
<organism>
    <name type="scientific">Pyrobaculum arsenaticum (strain DSM 13514 / JCM 11321 / PZ6)</name>
    <dbReference type="NCBI Taxonomy" id="340102"/>
    <lineage>
        <taxon>Archaea</taxon>
        <taxon>Thermoproteota</taxon>
        <taxon>Thermoprotei</taxon>
        <taxon>Thermoproteales</taxon>
        <taxon>Thermoproteaceae</taxon>
        <taxon>Pyrobaculum</taxon>
    </lineage>
</organism>